<comment type="function">
    <text>Receptor for both mineralocorticoids (MC) such as aldosterone and glucocorticoids (GC) such as corticosterone or cortisol. Binds to mineralocorticoid response elements (MRE) and transactivates target genes. The effect of MC is to increase ion and water transport and thus raise extracellular fluid volume and blood pressure and lower potassium levels.</text>
</comment>
<comment type="subunit">
    <text evidence="1">Heteromultimeric cytoplasmic complex with HSP90, HSP70, and FKBP4, in the absence of ligand. After ligand binding, it translocates to the nucleus and binds to DNA as a homodimer and as a heterodimer with NR3C1. Binds the coactivator NCOA2. May interact with HSD11B2 in the absence of ligand. Binds the coactivators NCOA1, TIF1 and NRIP1 (By similarity).</text>
</comment>
<comment type="subcellular location">
    <subcellularLocation>
        <location evidence="1">Cytoplasm</location>
    </subcellularLocation>
    <subcellularLocation>
        <location evidence="4">Nucleus</location>
    </subcellularLocation>
    <subcellularLocation>
        <location evidence="1">Endoplasmic reticulum membrane</location>
        <topology evidence="1">Peripheral membrane protein</topology>
    </subcellularLocation>
    <text evidence="1">Cytoplasmic and nuclear in the absence of ligand; nuclear after ligand-binding. When bound to HSD11B2, it is found associated with the endoplasmic reticulum membrane (By similarity).</text>
</comment>
<comment type="alternative products">
    <event type="alternative splicing"/>
    <isoform>
        <id>P22199-1</id>
        <name>1</name>
        <sequence type="displayed"/>
    </isoform>
    <isoform>
        <id>P22199-2</id>
        <name>2</name>
        <sequence type="described" ref="VSP_003705"/>
    </isoform>
    <isoform>
        <id>P22199-3</id>
        <name>3</name>
        <sequence type="described" ref="VSP_007361 VSP_007362"/>
    </isoform>
</comment>
<comment type="tissue specificity">
    <text evidence="7">Detected in liver, brain, heart, kidney, colon, aorta, hippocampus, hypothalamus and adrenal fasciculata.</text>
</comment>
<comment type="domain">
    <text>Composed of three domains: a modulating N-terminal domain, a DNA-binding domain and a C-terminal ligand-binding domain.</text>
</comment>
<comment type="PTM">
    <text evidence="9">Phosphorylated.</text>
</comment>
<comment type="miscellaneous">
    <molecule>Isoform 3</molecule>
    <text evidence="11">Very low transactivation activity, not increased by aldosterone.</text>
</comment>
<comment type="similarity">
    <text evidence="11">Belongs to the nuclear hormone receptor family. NR3 subfamily.</text>
</comment>
<proteinExistence type="evidence at protein level"/>
<sequence>METKGYHSLPEGLDMERRWSQVSQTLERSSLGPAERTTENNYMEIVNVSCVSGAIPNNSTQGSSKEKHELLPYIQQDNSRSGILPSDIKTELESKELSATVAESMGLYMDSVRDAEYTYDQQNQQGSLSPTKIYQNMEQLVKFYKENGHRSSTLSAMSRPLRSFMPDSAASMNGGALRAIVKSPIICHEKSSSVSSPLNMASSVCSPVGINSMSSSTTSFGSFPVHSPITQGTSLTCSPSVENRGSRSHSPTHASNVGSPLSSPLSSMKSPISSPPSHCSVKSPVSSPNNVPLRSSVSSPANLNNSRCSVSSPSNNTNNRSTLSSPTASTVGSIGSPISNAFSYATSGASAGAGAIQDVVPSPDTHEKGAHDVPFPKTEEVEKAISNGVTGPLNIVQYIKSEPDGAFSSSCLGGNSKISPSSPFSVPIKQESSKHSCSGASFKGNPTVNPFPFMDGSYFSFMDDKDYYSLSGILGPPVPGFDGSCEDSAFPVGIKQEPDDGSYYPEASIPSSAIVGVNSGGQSFHYRIGAQGTISLSRSPRDQSFQHLSSFPPVNTLVESWKPHGDLSSRRSDGYPVLEYIPENVSSSTLRSVSTGSSRPSKICLVCGDEASGCHYGVVTCGSCKVFFKRAVEGQHNYLCAGRNDCIIDKIRRKNCPACRLQKCLQAGMNLGARKSKKLGKLKGLHEEQPQQPPPPPPQSPEEGTTYIAPTKEPSVNSALVPQLTSITHALTPSPAMILENIEPETVYAGYDNSKPDTAESLLSTLNRLAAKQMIQVVKWAKVLPGFKNLPLEDQITLIQYSWMCLSSFALSWRSYKHTNSQLLYFAPDLVFNEEKMHQSAMYELCQGMRQISLQFVRLQLTFEEYSIMKVLLLLSTVPKDGLKSQAAFEEMRTNYIKELRKMVTKCPNSSGQSWQRFYQLTKLLDSMHDLVSDLLEFCFYTFRESQALKVEFPAMLVEIITDQLPKVESGNAKPLYFHRK</sequence>
<organism>
    <name type="scientific">Rattus norvegicus</name>
    <name type="common">Rat</name>
    <dbReference type="NCBI Taxonomy" id="10116"/>
    <lineage>
        <taxon>Eukaryota</taxon>
        <taxon>Metazoa</taxon>
        <taxon>Chordata</taxon>
        <taxon>Craniata</taxon>
        <taxon>Vertebrata</taxon>
        <taxon>Euteleostomi</taxon>
        <taxon>Mammalia</taxon>
        <taxon>Eutheria</taxon>
        <taxon>Euarchontoglires</taxon>
        <taxon>Glires</taxon>
        <taxon>Rodentia</taxon>
        <taxon>Myomorpha</taxon>
        <taxon>Muroidea</taxon>
        <taxon>Muridae</taxon>
        <taxon>Murinae</taxon>
        <taxon>Rattus</taxon>
    </lineage>
</organism>
<feature type="chain" id="PRO_0000053685" description="Mineralocorticoid receptor">
    <location>
        <begin position="1"/>
        <end position="981"/>
    </location>
</feature>
<feature type="domain" description="NR LBD" evidence="5">
    <location>
        <begin position="723"/>
        <end position="961"/>
    </location>
</feature>
<feature type="DNA-binding region" description="Nuclear receptor" evidence="4">
    <location>
        <begin position="604"/>
        <end position="669"/>
    </location>
</feature>
<feature type="zinc finger region" description="NR C4-type" evidence="4">
    <location>
        <begin position="604"/>
        <end position="624"/>
    </location>
</feature>
<feature type="zinc finger region" description="NR C4-type" evidence="4">
    <location>
        <begin position="640"/>
        <end position="664"/>
    </location>
</feature>
<feature type="region of interest" description="Modulating">
    <location>
        <begin position="1"/>
        <end position="603"/>
    </location>
</feature>
<feature type="region of interest" description="Disordered" evidence="6">
    <location>
        <begin position="234"/>
        <end position="331"/>
    </location>
</feature>
<feature type="region of interest" description="Disordered" evidence="6">
    <location>
        <begin position="355"/>
        <end position="376"/>
    </location>
</feature>
<feature type="region of interest" description="Hinge">
    <location>
        <begin position="670"/>
        <end position="722"/>
    </location>
</feature>
<feature type="region of interest" description="Disordered" evidence="6">
    <location>
        <begin position="684"/>
        <end position="710"/>
    </location>
</feature>
<feature type="region of interest" description="Important for coactivator binding" evidence="1">
    <location>
        <begin position="779"/>
        <end position="782"/>
    </location>
</feature>
<feature type="compositionally biased region" description="Polar residues" evidence="6">
    <location>
        <begin position="234"/>
        <end position="258"/>
    </location>
</feature>
<feature type="compositionally biased region" description="Low complexity" evidence="6">
    <location>
        <begin position="259"/>
        <end position="300"/>
    </location>
</feature>
<feature type="compositionally biased region" description="Low complexity" evidence="6">
    <location>
        <begin position="309"/>
        <end position="327"/>
    </location>
</feature>
<feature type="compositionally biased region" description="Pro residues" evidence="6">
    <location>
        <begin position="691"/>
        <end position="700"/>
    </location>
</feature>
<feature type="binding site" evidence="2">
    <location>
        <position position="604"/>
    </location>
    <ligand>
        <name>Zn(2+)</name>
        <dbReference type="ChEBI" id="CHEBI:29105"/>
        <label>1</label>
    </ligand>
</feature>
<feature type="binding site" evidence="2">
    <location>
        <position position="607"/>
    </location>
    <ligand>
        <name>Zn(2+)</name>
        <dbReference type="ChEBI" id="CHEBI:29105"/>
        <label>1</label>
    </ligand>
</feature>
<feature type="binding site" evidence="2">
    <location>
        <position position="621"/>
    </location>
    <ligand>
        <name>Zn(2+)</name>
        <dbReference type="ChEBI" id="CHEBI:29105"/>
        <label>1</label>
    </ligand>
</feature>
<feature type="binding site" evidence="2">
    <location>
        <position position="624"/>
    </location>
    <ligand>
        <name>Zn(2+)</name>
        <dbReference type="ChEBI" id="CHEBI:29105"/>
        <label>1</label>
    </ligand>
</feature>
<feature type="binding site" evidence="2">
    <location>
        <position position="640"/>
    </location>
    <ligand>
        <name>Zn(2+)</name>
        <dbReference type="ChEBI" id="CHEBI:29105"/>
        <label>2</label>
    </ligand>
</feature>
<feature type="binding site" evidence="2">
    <location>
        <position position="646"/>
    </location>
    <ligand>
        <name>Zn(2+)</name>
        <dbReference type="ChEBI" id="CHEBI:29105"/>
        <label>2</label>
    </ligand>
</feature>
<feature type="binding site" evidence="2">
    <location>
        <position position="656"/>
    </location>
    <ligand>
        <name>Zn(2+)</name>
        <dbReference type="ChEBI" id="CHEBI:29105"/>
        <label>2</label>
    </ligand>
</feature>
<feature type="binding site" evidence="2">
    <location>
        <position position="659"/>
    </location>
    <ligand>
        <name>Zn(2+)</name>
        <dbReference type="ChEBI" id="CHEBI:29105"/>
        <label>2</label>
    </ligand>
</feature>
<feature type="binding site" evidence="2">
    <location>
        <position position="767"/>
    </location>
    <ligand>
        <name>21-hydroxyprogesterone</name>
        <dbReference type="ChEBI" id="CHEBI:16973"/>
    </ligand>
</feature>
<feature type="binding site" evidence="2">
    <location>
        <position position="767"/>
    </location>
    <ligand>
        <name>aldosterone</name>
        <dbReference type="ChEBI" id="CHEBI:27584"/>
    </ligand>
</feature>
<feature type="binding site" evidence="2">
    <location>
        <position position="767"/>
    </location>
    <ligand>
        <name>progesterone</name>
        <dbReference type="ChEBI" id="CHEBI:17026"/>
    </ligand>
</feature>
<feature type="binding site" evidence="2">
    <location>
        <position position="773"/>
    </location>
    <ligand>
        <name>21-hydroxyprogesterone</name>
        <dbReference type="ChEBI" id="CHEBI:16973"/>
    </ligand>
</feature>
<feature type="binding site" evidence="2">
    <location>
        <position position="773"/>
    </location>
    <ligand>
        <name>aldosterone</name>
        <dbReference type="ChEBI" id="CHEBI:27584"/>
    </ligand>
</feature>
<feature type="binding site" evidence="2">
    <location>
        <position position="773"/>
    </location>
    <ligand>
        <name>progesterone</name>
        <dbReference type="ChEBI" id="CHEBI:17026"/>
    </ligand>
</feature>
<feature type="binding site" evidence="2">
    <location>
        <position position="814"/>
    </location>
    <ligand>
        <name>21-hydroxyprogesterone</name>
        <dbReference type="ChEBI" id="CHEBI:16973"/>
    </ligand>
</feature>
<feature type="binding site" evidence="2">
    <location>
        <position position="814"/>
    </location>
    <ligand>
        <name>aldosterone</name>
        <dbReference type="ChEBI" id="CHEBI:27584"/>
    </ligand>
</feature>
<feature type="binding site" evidence="2">
    <location>
        <position position="814"/>
    </location>
    <ligand>
        <name>progesterone</name>
        <dbReference type="ChEBI" id="CHEBI:17026"/>
    </ligand>
</feature>
<feature type="binding site" evidence="2">
    <location>
        <position position="942"/>
    </location>
    <ligand>
        <name>21-hydroxyprogesterone</name>
        <dbReference type="ChEBI" id="CHEBI:16973"/>
    </ligand>
</feature>
<feature type="binding site" evidence="2">
    <location>
        <position position="942"/>
    </location>
    <ligand>
        <name>aldosterone</name>
        <dbReference type="ChEBI" id="CHEBI:27584"/>
    </ligand>
</feature>
<feature type="binding site" evidence="2">
    <location>
        <position position="942"/>
    </location>
    <ligand>
        <name>progesterone</name>
        <dbReference type="ChEBI" id="CHEBI:17026"/>
    </ligand>
</feature>
<feature type="modified residue" description="Phosphoserine" evidence="3">
    <location>
        <position position="250"/>
    </location>
</feature>
<feature type="modified residue" description="Phosphoserine" evidence="3">
    <location>
        <position position="259"/>
    </location>
</feature>
<feature type="modified residue" description="Phosphoserine" evidence="12">
    <location>
        <position position="283"/>
    </location>
</feature>
<feature type="modified residue" description="Phosphoserine" evidence="12">
    <location>
        <position position="287"/>
    </location>
</feature>
<feature type="modified residue" description="Phosphoserine" evidence="3">
    <location>
        <position position="299"/>
    </location>
</feature>
<feature type="splice variant" id="VSP_003705" description="In isoform 2." evidence="10">
    <original>G</original>
    <variation>GKCSW</variation>
    <location>
        <position position="634"/>
    </location>
</feature>
<feature type="splice variant" id="VSP_007361" description="In isoform 3." evidence="11">
    <original>VLPGFKNLPLEDQITLIQYSWMCLS</original>
    <variation>NLKTCLSRTKSPSSSILGCVYHRSL</variation>
    <location>
        <begin position="783"/>
        <end position="807"/>
    </location>
</feature>
<feature type="splice variant" id="VSP_007362" description="In isoform 3." evidence="11">
    <location>
        <begin position="808"/>
        <end position="981"/>
    </location>
</feature>
<feature type="mutagenesis site" description="Lowers homodimerization and decreases receptor activity." evidence="8">
    <original>R</original>
    <variation>D</variation>
    <location>
        <position position="643"/>
    </location>
</feature>
<feature type="mutagenesis site" description="Lowers homodimerization and decreases receptor activity." evidence="8">
    <original>D</original>
    <variation>R</variation>
    <location>
        <position position="645"/>
    </location>
</feature>
<feature type="sequence conflict" description="In Ref. 3." evidence="11" ref="3">
    <original>E</original>
    <variation>K</variation>
    <location>
        <position position="688"/>
    </location>
</feature>
<feature type="sequence conflict" description="In Ref. 3." evidence="11" ref="3">
    <original>A</original>
    <variation>G</variation>
    <location>
        <position position="771"/>
    </location>
</feature>
<feature type="sequence conflict" description="In Ref. 3." evidence="11" ref="3">
    <original>I</original>
    <variation>S</variation>
    <location>
        <position position="775"/>
    </location>
</feature>
<dbReference type="EMBL" id="M36074">
    <property type="protein sequence ID" value="AAA41583.1"/>
    <property type="molecule type" value="mRNA"/>
</dbReference>
<dbReference type="EMBL" id="S79920">
    <property type="protein sequence ID" value="AAB35738.1"/>
    <property type="molecule type" value="mRNA"/>
</dbReference>
<dbReference type="EMBL" id="S75686">
    <property type="protein sequence ID" value="AAB32663.2"/>
    <property type="molecule type" value="mRNA"/>
</dbReference>
<dbReference type="PIR" id="A41401">
    <property type="entry name" value="A41401"/>
</dbReference>
<dbReference type="RefSeq" id="NP_037263.1">
    <property type="nucleotide sequence ID" value="NM_013131.1"/>
</dbReference>
<dbReference type="SMR" id="P22199"/>
<dbReference type="BioGRID" id="247701">
    <property type="interactions" value="1"/>
</dbReference>
<dbReference type="CORUM" id="P22199"/>
<dbReference type="FunCoup" id="P22199">
    <property type="interactions" value="188"/>
</dbReference>
<dbReference type="STRING" id="10116.ENSRNOP00000045942"/>
<dbReference type="BindingDB" id="P22199"/>
<dbReference type="ChEMBL" id="CHEMBL3507"/>
<dbReference type="DrugCentral" id="P22199"/>
<dbReference type="GuidetoPHARMACOLOGY" id="626"/>
<dbReference type="iPTMnet" id="P22199"/>
<dbReference type="PhosphoSitePlus" id="P22199"/>
<dbReference type="PaxDb" id="10116-ENSRNOP00000045942"/>
<dbReference type="GeneID" id="25672"/>
<dbReference type="KEGG" id="rno:25672"/>
<dbReference type="UCSC" id="RGD:3094">
    <molecule id="P22199-1"/>
    <property type="organism name" value="rat"/>
</dbReference>
<dbReference type="AGR" id="RGD:3094"/>
<dbReference type="CTD" id="4306"/>
<dbReference type="RGD" id="3094">
    <property type="gene designation" value="Nr3c2"/>
</dbReference>
<dbReference type="eggNOG" id="KOG3575">
    <property type="taxonomic scope" value="Eukaryota"/>
</dbReference>
<dbReference type="InParanoid" id="P22199"/>
<dbReference type="PhylomeDB" id="P22199"/>
<dbReference type="Reactome" id="R-RNO-3371497">
    <property type="pathway name" value="HSP90 chaperone cycle for steroid hormone receptors (SHR) in the presence of ligand"/>
</dbReference>
<dbReference type="Reactome" id="R-RNO-383280">
    <property type="pathway name" value="Nuclear Receptor transcription pathway"/>
</dbReference>
<dbReference type="Reactome" id="R-RNO-4090294">
    <property type="pathway name" value="SUMOylation of intracellular receptors"/>
</dbReference>
<dbReference type="PRO" id="PR:P22199"/>
<dbReference type="Proteomes" id="UP000002494">
    <property type="component" value="Unplaced"/>
</dbReference>
<dbReference type="GO" id="GO:0000785">
    <property type="term" value="C:chromatin"/>
    <property type="evidence" value="ECO:0000318"/>
    <property type="project" value="GO_Central"/>
</dbReference>
<dbReference type="GO" id="GO:0005737">
    <property type="term" value="C:cytoplasm"/>
    <property type="evidence" value="ECO:0000314"/>
    <property type="project" value="RGD"/>
</dbReference>
<dbReference type="GO" id="GO:0005789">
    <property type="term" value="C:endoplasmic reticulum membrane"/>
    <property type="evidence" value="ECO:0007669"/>
    <property type="project" value="UniProtKB-SubCell"/>
</dbReference>
<dbReference type="GO" id="GO:0098982">
    <property type="term" value="C:GABA-ergic synapse"/>
    <property type="evidence" value="ECO:0000266"/>
    <property type="project" value="RGD"/>
</dbReference>
<dbReference type="GO" id="GO:0098978">
    <property type="term" value="C:glutamatergic synapse"/>
    <property type="evidence" value="ECO:0000314"/>
    <property type="project" value="SynGO"/>
</dbReference>
<dbReference type="GO" id="GO:0005634">
    <property type="term" value="C:nucleus"/>
    <property type="evidence" value="ECO:0000314"/>
    <property type="project" value="RGD"/>
</dbReference>
<dbReference type="GO" id="GO:0099092">
    <property type="term" value="C:postsynaptic density, intracellular component"/>
    <property type="evidence" value="ECO:0000314"/>
    <property type="project" value="SynGO"/>
</dbReference>
<dbReference type="GO" id="GO:0098831">
    <property type="term" value="C:presynaptic active zone cytoplasmic component"/>
    <property type="evidence" value="ECO:0000314"/>
    <property type="project" value="SynGO"/>
</dbReference>
<dbReference type="GO" id="GO:0043235">
    <property type="term" value="C:receptor complex"/>
    <property type="evidence" value="ECO:0000266"/>
    <property type="project" value="RGD"/>
</dbReference>
<dbReference type="GO" id="GO:0003700">
    <property type="term" value="F:DNA-binding transcription factor activity"/>
    <property type="evidence" value="ECO:0000315"/>
    <property type="project" value="RGD"/>
</dbReference>
<dbReference type="GO" id="GO:0003690">
    <property type="term" value="F:double-stranded DNA binding"/>
    <property type="evidence" value="ECO:0000314"/>
    <property type="project" value="RGD"/>
</dbReference>
<dbReference type="GO" id="GO:0034056">
    <property type="term" value="F:estrogen response element binding"/>
    <property type="evidence" value="ECO:0000318"/>
    <property type="project" value="GO_Central"/>
</dbReference>
<dbReference type="GO" id="GO:0035035">
    <property type="term" value="F:histone acetyltransferase binding"/>
    <property type="evidence" value="ECO:0000353"/>
    <property type="project" value="RGD"/>
</dbReference>
<dbReference type="GO" id="GO:0042802">
    <property type="term" value="F:identical protein binding"/>
    <property type="evidence" value="ECO:0000353"/>
    <property type="project" value="RGD"/>
</dbReference>
<dbReference type="GO" id="GO:0004879">
    <property type="term" value="F:nuclear receptor activity"/>
    <property type="evidence" value="ECO:0000318"/>
    <property type="project" value="GO_Central"/>
</dbReference>
<dbReference type="GO" id="GO:0003707">
    <property type="term" value="F:nuclear steroid receptor activity"/>
    <property type="evidence" value="ECO:0000315"/>
    <property type="project" value="RGD"/>
</dbReference>
<dbReference type="GO" id="GO:0044877">
    <property type="term" value="F:protein-containing complex binding"/>
    <property type="evidence" value="ECO:0000314"/>
    <property type="project" value="RGD"/>
</dbReference>
<dbReference type="GO" id="GO:0043565">
    <property type="term" value="F:sequence-specific DNA binding"/>
    <property type="evidence" value="ECO:0000314"/>
    <property type="project" value="RGD"/>
</dbReference>
<dbReference type="GO" id="GO:1990837">
    <property type="term" value="F:sequence-specific double-stranded DNA binding"/>
    <property type="evidence" value="ECO:0000266"/>
    <property type="project" value="RGD"/>
</dbReference>
<dbReference type="GO" id="GO:0005496">
    <property type="term" value="F:steroid binding"/>
    <property type="evidence" value="ECO:0000315"/>
    <property type="project" value="RGD"/>
</dbReference>
<dbReference type="GO" id="GO:0017025">
    <property type="term" value="F:TBP-class protein binding"/>
    <property type="evidence" value="ECO:0000266"/>
    <property type="project" value="RGD"/>
</dbReference>
<dbReference type="GO" id="GO:0001223">
    <property type="term" value="F:transcription coactivator binding"/>
    <property type="evidence" value="ECO:0000353"/>
    <property type="project" value="RGD"/>
</dbReference>
<dbReference type="GO" id="GO:0008270">
    <property type="term" value="F:zinc ion binding"/>
    <property type="evidence" value="ECO:0007669"/>
    <property type="project" value="UniProtKB-KW"/>
</dbReference>
<dbReference type="GO" id="GO:0038166">
    <property type="term" value="P:angiotensin-activated signaling pathway"/>
    <property type="evidence" value="ECO:0000266"/>
    <property type="project" value="RGD"/>
</dbReference>
<dbReference type="GO" id="GO:1904045">
    <property type="term" value="P:cellular response to aldosterone"/>
    <property type="evidence" value="ECO:0000315"/>
    <property type="project" value="RGD"/>
</dbReference>
<dbReference type="GO" id="GO:0006883">
    <property type="term" value="P:intracellular sodium ion homeostasis"/>
    <property type="evidence" value="ECO:0000266"/>
    <property type="project" value="RGD"/>
</dbReference>
<dbReference type="GO" id="GO:0007626">
    <property type="term" value="P:locomotory behavior"/>
    <property type="evidence" value="ECO:0000315"/>
    <property type="project" value="RGD"/>
</dbReference>
<dbReference type="GO" id="GO:0031958">
    <property type="term" value="P:nuclear receptor-mediated corticosteroid signaling pathway"/>
    <property type="evidence" value="ECO:0000314"/>
    <property type="project" value="RGD"/>
</dbReference>
<dbReference type="GO" id="GO:0030518">
    <property type="term" value="P:nuclear receptor-mediated steroid hormone signaling pathway"/>
    <property type="evidence" value="ECO:0000318"/>
    <property type="project" value="GO_Central"/>
</dbReference>
<dbReference type="GO" id="GO:1901224">
    <property type="term" value="P:positive regulation of non-canonical NF-kappaB signal transduction"/>
    <property type="evidence" value="ECO:0000266"/>
    <property type="project" value="RGD"/>
</dbReference>
<dbReference type="GO" id="GO:0045944">
    <property type="term" value="P:positive regulation of transcription by RNA polymerase II"/>
    <property type="evidence" value="ECO:0000315"/>
    <property type="project" value="RGD"/>
</dbReference>
<dbReference type="GO" id="GO:0055075">
    <property type="term" value="P:potassium ion homeostasis"/>
    <property type="evidence" value="ECO:0000266"/>
    <property type="project" value="RGD"/>
</dbReference>
<dbReference type="GO" id="GO:0099171">
    <property type="term" value="P:presynaptic modulation of chemical synaptic transmission"/>
    <property type="evidence" value="ECO:0000266"/>
    <property type="project" value="RGD"/>
</dbReference>
<dbReference type="GO" id="GO:0002017">
    <property type="term" value="P:regulation of blood volume by renal aldosterone"/>
    <property type="evidence" value="ECO:0000266"/>
    <property type="project" value="RGD"/>
</dbReference>
<dbReference type="GO" id="GO:0042127">
    <property type="term" value="P:regulation of cell population proliferation"/>
    <property type="evidence" value="ECO:0000314"/>
    <property type="project" value="RGD"/>
</dbReference>
<dbReference type="GO" id="GO:0060078">
    <property type="term" value="P:regulation of postsynaptic membrane potential"/>
    <property type="evidence" value="ECO:0000266"/>
    <property type="project" value="RGD"/>
</dbReference>
<dbReference type="GO" id="GO:0006357">
    <property type="term" value="P:regulation of transcription by RNA polymerase II"/>
    <property type="evidence" value="ECO:0000318"/>
    <property type="project" value="GO_Central"/>
</dbReference>
<dbReference type="GO" id="GO:0035812">
    <property type="term" value="P:renal sodium excretion"/>
    <property type="evidence" value="ECO:0000266"/>
    <property type="project" value="RGD"/>
</dbReference>
<dbReference type="GO" id="GO:0097305">
    <property type="term" value="P:response to alcohol"/>
    <property type="evidence" value="ECO:0000270"/>
    <property type="project" value="RGD"/>
</dbReference>
<dbReference type="GO" id="GO:0051412">
    <property type="term" value="P:response to corticosterone"/>
    <property type="evidence" value="ECO:0000314"/>
    <property type="project" value="RGD"/>
</dbReference>
<dbReference type="GO" id="GO:0007165">
    <property type="term" value="P:signal transduction"/>
    <property type="evidence" value="ECO:0000266"/>
    <property type="project" value="RGD"/>
</dbReference>
<dbReference type="CDD" id="cd07172">
    <property type="entry name" value="NR_DBD_GR_PR"/>
    <property type="match status" value="1"/>
</dbReference>
<dbReference type="CDD" id="cd07075">
    <property type="entry name" value="NR_LBD_MR"/>
    <property type="match status" value="1"/>
</dbReference>
<dbReference type="FunFam" id="1.10.565.10:FF:000004">
    <property type="entry name" value="Androgen receptor variant"/>
    <property type="match status" value="1"/>
</dbReference>
<dbReference type="FunFam" id="3.30.50.10:FF:000029">
    <property type="entry name" value="mineralocorticoid receptor isoform X1"/>
    <property type="match status" value="1"/>
</dbReference>
<dbReference type="Gene3D" id="3.30.50.10">
    <property type="entry name" value="Erythroid Transcription Factor GATA-1, subunit A"/>
    <property type="match status" value="1"/>
</dbReference>
<dbReference type="Gene3D" id="1.10.565.10">
    <property type="entry name" value="Retinoid X Receptor"/>
    <property type="match status" value="1"/>
</dbReference>
<dbReference type="InterPro" id="IPR035500">
    <property type="entry name" value="NHR-like_dom_sf"/>
</dbReference>
<dbReference type="InterPro" id="IPR000536">
    <property type="entry name" value="Nucl_hrmn_rcpt_lig-bd"/>
</dbReference>
<dbReference type="InterPro" id="IPR050200">
    <property type="entry name" value="Nuclear_hormone_rcpt_NR3"/>
</dbReference>
<dbReference type="InterPro" id="IPR001628">
    <property type="entry name" value="Znf_hrmn_rcpt"/>
</dbReference>
<dbReference type="InterPro" id="IPR013088">
    <property type="entry name" value="Znf_NHR/GATA"/>
</dbReference>
<dbReference type="PANTHER" id="PTHR48092">
    <property type="entry name" value="KNIRPS-RELATED PROTEIN-RELATED"/>
    <property type="match status" value="1"/>
</dbReference>
<dbReference type="Pfam" id="PF00104">
    <property type="entry name" value="Hormone_recep"/>
    <property type="match status" value="1"/>
</dbReference>
<dbReference type="Pfam" id="PF00105">
    <property type="entry name" value="zf-C4"/>
    <property type="match status" value="1"/>
</dbReference>
<dbReference type="PRINTS" id="PR00047">
    <property type="entry name" value="STROIDFINGER"/>
</dbReference>
<dbReference type="SMART" id="SM00430">
    <property type="entry name" value="HOLI"/>
    <property type="match status" value="1"/>
</dbReference>
<dbReference type="SMART" id="SM00399">
    <property type="entry name" value="ZnF_C4"/>
    <property type="match status" value="1"/>
</dbReference>
<dbReference type="SUPFAM" id="SSF57716">
    <property type="entry name" value="Glucocorticoid receptor-like (DNA-binding domain)"/>
    <property type="match status" value="1"/>
</dbReference>
<dbReference type="SUPFAM" id="SSF48508">
    <property type="entry name" value="Nuclear receptor ligand-binding domain"/>
    <property type="match status" value="1"/>
</dbReference>
<dbReference type="PROSITE" id="PS51843">
    <property type="entry name" value="NR_LBD"/>
    <property type="match status" value="1"/>
</dbReference>
<dbReference type="PROSITE" id="PS00031">
    <property type="entry name" value="NUCLEAR_REC_DBD_1"/>
    <property type="match status" value="1"/>
</dbReference>
<dbReference type="PROSITE" id="PS51030">
    <property type="entry name" value="NUCLEAR_REC_DBD_2"/>
    <property type="match status" value="1"/>
</dbReference>
<reference key="1">
    <citation type="journal article" date="1989" name="Mol. Endocrinol.">
        <title>Molecular cloning of a mineralocorticoid (type I) receptor complementary DNA from rat hippocampus.</title>
        <authorList>
            <person name="Patel P.D."/>
            <person name="Sherman T.G."/>
            <person name="Goldman D.J."/>
            <person name="Watson S.J."/>
        </authorList>
    </citation>
    <scope>NUCLEOTIDE SEQUENCE [MRNA] (ISOFORM 1)</scope>
    <source>
        <strain>Sprague-Dawley</strain>
        <tissue>Hippocampus</tissue>
    </source>
</reference>
<reference key="2">
    <citation type="journal article" date="1995" name="J. Steroid Biochem. Mol. Biol.">
        <title>Identification of a splice variant of the rat and human mineralocorticoid receptor genes.</title>
        <authorList>
            <person name="Bloem L.J."/>
            <person name="Guo C."/>
            <person name="Pratt J.H."/>
        </authorList>
    </citation>
    <scope>NUCLEOTIDE SEQUENCE [MRNA] OF 597-679 (ISOFORM 2)</scope>
    <scope>TISSUE SPECIFICITY</scope>
    <source>
        <tissue>Brain</tissue>
    </source>
</reference>
<reference key="3">
    <citation type="journal article" date="1994" name="Hear. Res.">
        <title>Mineralocorticoid type I receptor in the rat cochlea: mRNA identification by polymerase chain reaction (PCR) and in situ hybridization.</title>
        <authorList>
            <person name="Furuta H."/>
            <person name="Mori N."/>
            <person name="Sato C."/>
            <person name="Hoshikawa H."/>
            <person name="Sakai S."/>
            <person name="Iwakura S."/>
            <person name="Doi K."/>
        </authorList>
    </citation>
    <scope>NUCLEOTIDE SEQUENCE [MRNA] OF 688-787 (ISOFORM 1)</scope>
    <source>
        <strain>Wistar</strain>
        <tissue>Cochlea</tissue>
    </source>
</reference>
<reference key="4">
    <citation type="journal article" date="1995" name="Proc. Natl. Acad. Sci. U.S.A.">
        <title>Steroid receptor heterodimerization demonstrated in vitro and in vivo.</title>
        <authorList>
            <person name="Liu W."/>
            <person name="Wang J."/>
            <person name="Sauter N.K."/>
            <person name="Pearce D."/>
        </authorList>
    </citation>
    <scope>HOMODIMERIZATION</scope>
    <scope>HETERODIMERIZATION WITH NR3C1</scope>
    <scope>MUTAGENESIS OF ARG-643 AND ASP-645</scope>
</reference>
<reference key="5">
    <citation type="journal article" date="1997" name="Mol. Cell. Biol.">
        <title>GRIP1, a transcriptional coactivator for the AF-2 transactivation domain of steroid, thyroid, retinoid, and vitamin D receptors.</title>
        <authorList>
            <person name="Hong H."/>
            <person name="Kohli K."/>
            <person name="Garabedian M.J."/>
            <person name="Stallcup M.R."/>
        </authorList>
    </citation>
    <scope>INTERACTION WITH NCOA2</scope>
</reference>
<reference key="6">
    <citation type="journal article" date="1998" name="Biochem. J.">
        <title>Native rat kidney mineralocorticoid receptor is a phosphoprotein whose transformation to a DNA-binding form is induced by phosphatases.</title>
        <authorList>
            <person name="Galigniana M.D."/>
        </authorList>
    </citation>
    <scope>PHOSPHORYLATION</scope>
</reference>
<reference key="7">
    <citation type="journal article" date="2000" name="Mol. Cell. Endocrinol.">
        <title>An alternatively spliced rat mineralocorticoid receptor mRNA causing truncation of the steroid binding domain.</title>
        <authorList>
            <person name="Zhou M.-Y."/>
            <person name="Gomez-Sanchez C.E."/>
            <person name="Gomez-Sanchez E.P."/>
        </authorList>
    </citation>
    <scope>IDENTIFICATION OF ISOFORM 3</scope>
</reference>
<reference key="8">
    <citation type="journal article" date="2012" name="Nat. Commun.">
        <title>Quantitative maps of protein phosphorylation sites across 14 different rat organs and tissues.</title>
        <authorList>
            <person name="Lundby A."/>
            <person name="Secher A."/>
            <person name="Lage K."/>
            <person name="Nordsborg N.B."/>
            <person name="Dmytriyev A."/>
            <person name="Lundby C."/>
            <person name="Olsen J.V."/>
        </authorList>
    </citation>
    <scope>PHOSPHORYLATION [LARGE SCALE ANALYSIS] AT SER-283 AND SER-287</scope>
    <scope>IDENTIFICATION BY MASS SPECTROMETRY [LARGE SCALE ANALYSIS]</scope>
</reference>
<gene>
    <name type="primary">Nr3c2</name>
    <name type="synonym">Mlr</name>
</gene>
<protein>
    <recommendedName>
        <fullName>Mineralocorticoid receptor</fullName>
        <shortName>MR</shortName>
    </recommendedName>
    <alternativeName>
        <fullName>Nuclear receptor subfamily 3 group C member 2</fullName>
    </alternativeName>
</protein>
<evidence type="ECO:0000250" key="1"/>
<evidence type="ECO:0000250" key="2">
    <source>
        <dbReference type="UniProtKB" id="P08235"/>
    </source>
</evidence>
<evidence type="ECO:0000250" key="3">
    <source>
        <dbReference type="UniProtKB" id="Q8VII8"/>
    </source>
</evidence>
<evidence type="ECO:0000255" key="4">
    <source>
        <dbReference type="PROSITE-ProRule" id="PRU00407"/>
    </source>
</evidence>
<evidence type="ECO:0000255" key="5">
    <source>
        <dbReference type="PROSITE-ProRule" id="PRU01189"/>
    </source>
</evidence>
<evidence type="ECO:0000256" key="6">
    <source>
        <dbReference type="SAM" id="MobiDB-lite"/>
    </source>
</evidence>
<evidence type="ECO:0000269" key="7">
    <source>
    </source>
</evidence>
<evidence type="ECO:0000269" key="8">
    <source>
    </source>
</evidence>
<evidence type="ECO:0000269" key="9">
    <source>
    </source>
</evidence>
<evidence type="ECO:0000303" key="10">
    <source>
    </source>
</evidence>
<evidence type="ECO:0000305" key="11"/>
<evidence type="ECO:0007744" key="12">
    <source>
    </source>
</evidence>
<keyword id="KW-0025">Alternative splicing</keyword>
<keyword id="KW-0963">Cytoplasm</keyword>
<keyword id="KW-0238">DNA-binding</keyword>
<keyword id="KW-0256">Endoplasmic reticulum</keyword>
<keyword id="KW-0446">Lipid-binding</keyword>
<keyword id="KW-0472">Membrane</keyword>
<keyword id="KW-0479">Metal-binding</keyword>
<keyword id="KW-0539">Nucleus</keyword>
<keyword id="KW-0597">Phosphoprotein</keyword>
<keyword id="KW-0675">Receptor</keyword>
<keyword id="KW-1185">Reference proteome</keyword>
<keyword id="KW-0754">Steroid-binding</keyword>
<keyword id="KW-0804">Transcription</keyword>
<keyword id="KW-0805">Transcription regulation</keyword>
<keyword id="KW-0862">Zinc</keyword>
<keyword id="KW-0863">Zinc-finger</keyword>
<accession>P22199</accession>
<accession>Q63763</accession>
<accession>Q64174</accession>
<name>MCR_RAT</name>